<dbReference type="EC" id="1.14.99.-" evidence="2"/>
<dbReference type="EMBL" id="CP000046">
    <property type="protein sequence ID" value="AAW38581.1"/>
    <property type="molecule type" value="Genomic_DNA"/>
</dbReference>
<dbReference type="RefSeq" id="WP_000160456.1">
    <property type="nucleotide sequence ID" value="NZ_JBGOFO010000001.1"/>
</dbReference>
<dbReference type="SMR" id="Q5HCY6"/>
<dbReference type="KEGG" id="sac:SACOL2579"/>
<dbReference type="HOGENOM" id="CLU_019722_2_1_9"/>
<dbReference type="UniPathway" id="UPA00029">
    <property type="reaction ID" value="UER00558"/>
</dbReference>
<dbReference type="Proteomes" id="UP000000530">
    <property type="component" value="Chromosome"/>
</dbReference>
<dbReference type="GO" id="GO:0016491">
    <property type="term" value="F:oxidoreductase activity"/>
    <property type="evidence" value="ECO:0007669"/>
    <property type="project" value="UniProtKB-KW"/>
</dbReference>
<dbReference type="GO" id="GO:0016117">
    <property type="term" value="P:carotenoid biosynthetic process"/>
    <property type="evidence" value="ECO:0007669"/>
    <property type="project" value="UniProtKB-KW"/>
</dbReference>
<dbReference type="Gene3D" id="3.50.50.60">
    <property type="entry name" value="FAD/NAD(P)-binding domain"/>
    <property type="match status" value="2"/>
</dbReference>
<dbReference type="InterPro" id="IPR002937">
    <property type="entry name" value="Amino_oxidase"/>
</dbReference>
<dbReference type="InterPro" id="IPR014105">
    <property type="entry name" value="Carotenoid/retinoid_OxRdtase"/>
</dbReference>
<dbReference type="InterPro" id="IPR036188">
    <property type="entry name" value="FAD/NAD-bd_sf"/>
</dbReference>
<dbReference type="NCBIfam" id="TIGR02734">
    <property type="entry name" value="crtI_fam"/>
    <property type="match status" value="1"/>
</dbReference>
<dbReference type="PANTHER" id="PTHR43734:SF7">
    <property type="entry name" value="4,4'-DIAPONEUROSPORENE OXYGENASE"/>
    <property type="match status" value="1"/>
</dbReference>
<dbReference type="PANTHER" id="PTHR43734">
    <property type="entry name" value="PHYTOENE DESATURASE"/>
    <property type="match status" value="1"/>
</dbReference>
<dbReference type="Pfam" id="PF01593">
    <property type="entry name" value="Amino_oxidase"/>
    <property type="match status" value="1"/>
</dbReference>
<dbReference type="SUPFAM" id="SSF51905">
    <property type="entry name" value="FAD/NAD(P)-binding domain"/>
    <property type="match status" value="1"/>
</dbReference>
<reference key="1">
    <citation type="journal article" date="2005" name="J. Bacteriol.">
        <title>Insights on evolution of virulence and resistance from the complete genome analysis of an early methicillin-resistant Staphylococcus aureus strain and a biofilm-producing methicillin-resistant Staphylococcus epidermidis strain.</title>
        <authorList>
            <person name="Gill S.R."/>
            <person name="Fouts D.E."/>
            <person name="Archer G.L."/>
            <person name="Mongodin E.F."/>
            <person name="DeBoy R.T."/>
            <person name="Ravel J."/>
            <person name="Paulsen I.T."/>
            <person name="Kolonay J.F."/>
            <person name="Brinkac L.M."/>
            <person name="Beanan M.J."/>
            <person name="Dodson R.J."/>
            <person name="Daugherty S.C."/>
            <person name="Madupu R."/>
            <person name="Angiuoli S.V."/>
            <person name="Durkin A.S."/>
            <person name="Haft D.H."/>
            <person name="Vamathevan J.J."/>
            <person name="Khouri H."/>
            <person name="Utterback T.R."/>
            <person name="Lee C."/>
            <person name="Dimitrov G."/>
            <person name="Jiang L."/>
            <person name="Qin H."/>
            <person name="Weidman J."/>
            <person name="Tran K."/>
            <person name="Kang K.H."/>
            <person name="Hance I.R."/>
            <person name="Nelson K.E."/>
            <person name="Fraser C.M."/>
        </authorList>
    </citation>
    <scope>NUCLEOTIDE SEQUENCE [LARGE SCALE GENOMIC DNA]</scope>
    <source>
        <strain>COL</strain>
    </source>
</reference>
<feature type="chain" id="PRO_0000285225" description="4,4'-diaponeurosporene oxygenase">
    <location>
        <begin position="1"/>
        <end position="497"/>
    </location>
</feature>
<feature type="binding site" evidence="3">
    <location>
        <begin position="7"/>
        <end position="19"/>
    </location>
    <ligand>
        <name>FAD</name>
        <dbReference type="ChEBI" id="CHEBI:57692"/>
    </ligand>
</feature>
<gene>
    <name evidence="2" type="primary">crtP</name>
    <name type="ordered locus">SACOL2579</name>
</gene>
<protein>
    <recommendedName>
        <fullName evidence="2">4,4'-diaponeurosporene oxygenase</fullName>
        <ecNumber evidence="2">1.14.99.-</ecNumber>
    </recommendedName>
    <alternativeName>
        <fullName evidence="2">4,4'-diaponeurosporene oxidase</fullName>
    </alternativeName>
    <alternativeName>
        <fullName evidence="2">Carotenoid oxidase</fullName>
    </alternativeName>
</protein>
<sequence length="497" mass="57187">MTKHIIVIGGGLGGISAAIRMAQSGYSVSLYEQNNHIGGKVNRHESDGFGFDLGPSILTMPYIFEKLFEYSKKQMSDYVTIKRLPHQWRSFFPDGTTIDLYEGIKETGQHNAILSKQDIEELQNYLNYTRRIDRITEKGYFNYGLDTLSQIIKFHGPLNALINYDYVHTMQQAIDKRISNPYLRQMLGYFIKYVGSSSYDAPAVLSMLFHMQQEQGLWYVEGGIHHLANALEKLAREEGVTIHTGARVDNIKTYQRRVTGVRLDTGEFVKADYIISNMEVIPTYKYLIHLDTQRLNKLEREFEPASSGYVMHLGVACQYPQLAHHNFFFTENAYLNYQQVFHEKVLPDDPTIYLVNTNKTDHTQAPVGYENIKVLPHIPYIQDQPFTTEDYAKFRDKILDKLEKMGLTDLRKHIIYEDVWTPEDIEKNYRSNRGAIYGVVADKKKNKGFKFPKESQYFENLYFVGGSVNPGGGMPMVTLSGQQVADKINAREAKNRK</sequence>
<organism>
    <name type="scientific">Staphylococcus aureus (strain COL)</name>
    <dbReference type="NCBI Taxonomy" id="93062"/>
    <lineage>
        <taxon>Bacteria</taxon>
        <taxon>Bacillati</taxon>
        <taxon>Bacillota</taxon>
        <taxon>Bacilli</taxon>
        <taxon>Bacillales</taxon>
        <taxon>Staphylococcaceae</taxon>
        <taxon>Staphylococcus</taxon>
    </lineage>
</organism>
<evidence type="ECO:0000250" key="1">
    <source>
        <dbReference type="UniProtKB" id="P21685"/>
    </source>
</evidence>
<evidence type="ECO:0000250" key="2">
    <source>
        <dbReference type="UniProtKB" id="Q2FV57"/>
    </source>
</evidence>
<evidence type="ECO:0000255" key="3"/>
<keyword id="KW-0125">Carotenoid biosynthesis</keyword>
<keyword id="KW-0274">FAD</keyword>
<keyword id="KW-0285">Flavoprotein</keyword>
<keyword id="KW-0560">Oxidoreductase</keyword>
<keyword id="KW-0843">Virulence</keyword>
<comment type="function">
    <text evidence="2">Involved in the biosynthesis of the yellow-orange carotenoid staphyloxanthin, which plays a role in the virulence via its protective function against oxidative stress. Catalyzes the oxidation of the terminal methyl side group of 4,4'-diaponeurosporene to form 4,4'-diaponeurosporen-4-al.</text>
</comment>
<comment type="catalytic activity">
    <reaction evidence="2">
        <text>all-trans-4,4'-diaponeurosporene + 2 AH2 + 2 O2 = 4,4'-diaponeurosporenal + 2 A + 3 H2O</text>
        <dbReference type="Rhea" id="RHEA:56104"/>
        <dbReference type="ChEBI" id="CHEBI:13193"/>
        <dbReference type="ChEBI" id="CHEBI:15377"/>
        <dbReference type="ChEBI" id="CHEBI:15379"/>
        <dbReference type="ChEBI" id="CHEBI:17499"/>
        <dbReference type="ChEBI" id="CHEBI:62743"/>
        <dbReference type="ChEBI" id="CHEBI:79065"/>
    </reaction>
</comment>
<comment type="cofactor">
    <cofactor evidence="1">
        <name>FAD</name>
        <dbReference type="ChEBI" id="CHEBI:57692"/>
    </cofactor>
</comment>
<comment type="pathway">
    <text evidence="2">Carotenoid biosynthesis; staphyloxanthin biosynthesis; staphyloxanthin from farnesyl diphosphate: step 3/5.</text>
</comment>
<comment type="similarity">
    <text evidence="2">Belongs to the carotenoid/retinoid oxidoreductase family. CrtP subfamily.</text>
</comment>
<proteinExistence type="inferred from homology"/>
<accession>Q5HCY6</accession>
<name>CRTP_STAAC</name>